<evidence type="ECO:0000250" key="1"/>
<evidence type="ECO:0000255" key="2">
    <source>
        <dbReference type="PROSITE-ProRule" id="PRU00366"/>
    </source>
</evidence>
<evidence type="ECO:0000256" key="3">
    <source>
        <dbReference type="SAM" id="MobiDB-lite"/>
    </source>
</evidence>
<evidence type="ECO:0000305" key="4"/>
<dbReference type="EMBL" id="AY560842">
    <property type="protein sequence ID" value="AAT44909.1"/>
    <property type="molecule type" value="mRNA"/>
</dbReference>
<dbReference type="EMBL" id="AC010795">
    <property type="protein sequence ID" value="AAG51609.1"/>
    <property type="molecule type" value="Genomic_DNA"/>
</dbReference>
<dbReference type="EMBL" id="AC011000">
    <property type="protein sequence ID" value="AAF75817.1"/>
    <property type="molecule type" value="Genomic_DNA"/>
</dbReference>
<dbReference type="EMBL" id="CP002684">
    <property type="status" value="NOT_ANNOTATED_CDS"/>
    <property type="molecule type" value="Genomic_DNA"/>
</dbReference>
<dbReference type="PIR" id="F96655">
    <property type="entry name" value="F96655"/>
</dbReference>
<dbReference type="FunCoup" id="Q9CAN9">
    <property type="interactions" value="21"/>
</dbReference>
<dbReference type="STRING" id="3702.Q9CAN9"/>
<dbReference type="GlyGen" id="Q9CAN9">
    <property type="glycosylation" value="2 sites"/>
</dbReference>
<dbReference type="Araport" id="AT1G63040"/>
<dbReference type="TAIR" id="AT1G63040"/>
<dbReference type="InParanoid" id="Q9CAN9"/>
<dbReference type="PRO" id="PR:Q9CAN9"/>
<dbReference type="Proteomes" id="UP000006548">
    <property type="component" value="Chromosome 1"/>
</dbReference>
<dbReference type="ExpressionAtlas" id="Q9CAN9">
    <property type="expression patterns" value="baseline and differential"/>
</dbReference>
<dbReference type="GO" id="GO:0005634">
    <property type="term" value="C:nucleus"/>
    <property type="evidence" value="ECO:0007669"/>
    <property type="project" value="UniProtKB-SubCell"/>
</dbReference>
<dbReference type="GO" id="GO:0003677">
    <property type="term" value="F:DNA binding"/>
    <property type="evidence" value="ECO:0007669"/>
    <property type="project" value="UniProtKB-KW"/>
</dbReference>
<dbReference type="GO" id="GO:0003700">
    <property type="term" value="F:DNA-binding transcription factor activity"/>
    <property type="evidence" value="ECO:0007669"/>
    <property type="project" value="InterPro"/>
</dbReference>
<dbReference type="GO" id="GO:0009873">
    <property type="term" value="P:ethylene-activated signaling pathway"/>
    <property type="evidence" value="ECO:0007669"/>
    <property type="project" value="UniProtKB-KW"/>
</dbReference>
<dbReference type="CDD" id="cd00018">
    <property type="entry name" value="AP2"/>
    <property type="match status" value="1"/>
</dbReference>
<dbReference type="Gene3D" id="3.30.730.10">
    <property type="entry name" value="AP2/ERF domain"/>
    <property type="match status" value="1"/>
</dbReference>
<dbReference type="InterPro" id="IPR001471">
    <property type="entry name" value="AP2/ERF_dom"/>
</dbReference>
<dbReference type="InterPro" id="IPR036955">
    <property type="entry name" value="AP2/ERF_dom_sf"/>
</dbReference>
<dbReference type="InterPro" id="IPR016177">
    <property type="entry name" value="DNA-bd_dom_sf"/>
</dbReference>
<dbReference type="InterPro" id="IPR045277">
    <property type="entry name" value="DRE1A-I"/>
</dbReference>
<dbReference type="PANTHER" id="PTHR31839:SF85">
    <property type="entry name" value="AP2_ERF DOMAIN-CONTAINING PROTEIN"/>
    <property type="match status" value="1"/>
</dbReference>
<dbReference type="PANTHER" id="PTHR31839">
    <property type="entry name" value="DEHYDRATION-RESPONSIVE ELEMENT-BINDING PROTEIN 1D"/>
    <property type="match status" value="1"/>
</dbReference>
<dbReference type="Pfam" id="PF00847">
    <property type="entry name" value="AP2"/>
    <property type="match status" value="1"/>
</dbReference>
<dbReference type="SMART" id="SM00380">
    <property type="entry name" value="AP2"/>
    <property type="match status" value="1"/>
</dbReference>
<dbReference type="SUPFAM" id="SSF54171">
    <property type="entry name" value="DNA-binding domain"/>
    <property type="match status" value="1"/>
</dbReference>
<dbReference type="PROSITE" id="PS51032">
    <property type="entry name" value="AP2_ERF"/>
    <property type="match status" value="1"/>
</dbReference>
<gene>
    <name type="primary">ERF026</name>
    <name type="ordered locus">At1g63040</name>
    <name type="ORF">F16M19.1</name>
    <name type="ORF">F16P17.21</name>
</gene>
<keyword id="KW-0010">Activator</keyword>
<keyword id="KW-0238">DNA-binding</keyword>
<keyword id="KW-0936">Ethylene signaling pathway</keyword>
<keyword id="KW-0539">Nucleus</keyword>
<keyword id="KW-1185">Reference proteome</keyword>
<keyword id="KW-0804">Transcription</keyword>
<keyword id="KW-0805">Transcription regulation</keyword>
<comment type="function">
    <text evidence="1">Probably acts as a transcriptional activator. Binds to the GCC-box pathogenesis-related promoter element. May be involved in the regulation of gene expression by stress factors and by components of stress signal transduction pathways (By similarity).</text>
</comment>
<comment type="subcellular location">
    <subcellularLocation>
        <location evidence="4">Nucleus</location>
    </subcellularLocation>
</comment>
<comment type="similarity">
    <text evidence="4">Belongs to the AP2/ERF transcription factor family. ERF subfamily.</text>
</comment>
<accession>Q9CAN9</accession>
<accession>Q9LQ01</accession>
<feature type="chain" id="PRO_0000290386" description="Ethylene-responsive transcription factor ERF026">
    <location>
        <begin position="1"/>
        <end position="248"/>
    </location>
</feature>
<feature type="DNA-binding region" description="AP2/ERF" evidence="2">
    <location>
        <begin position="89"/>
        <end position="145"/>
    </location>
</feature>
<feature type="region of interest" description="Disordered" evidence="3">
    <location>
        <begin position="225"/>
        <end position="248"/>
    </location>
</feature>
<sequence length="248" mass="26017">MADPNNPITEPKAIIQSSTSSSVTIVPVPTCGDSLSDSATCENPCPLDTITTTTTTVCFAAPSSTASGNDINTLMATDTDISRRKKNPVYRGIRCRSGKWVSEIREPKKTTRVWLGTYPTPEMAAAAYDVAALALKGGDTLLNFPDSLGSYPIPLSSSAAHIRCAAAAAAATRGAAGAAVKVGQKKEDKVYDTAESSTMGFVDEEELLNMPGLLADMAKGMMVAPPWMGSPPSDDSPENSDGESLWSY</sequence>
<protein>
    <recommendedName>
        <fullName>Ethylene-responsive transcription factor ERF026</fullName>
    </recommendedName>
</protein>
<name>ERF26_ARATH</name>
<reference key="1">
    <citation type="submission" date="2004-02" db="EMBL/GenBank/DDBJ databases">
        <title>Molecular cloning, expression, phylogenetic and functional characterization of the Arabidopsis AP2/EREBP transcription factor family.</title>
        <authorList>
            <person name="Pan Y."/>
            <person name="Gong W."/>
            <person name="Liu D."/>
            <person name="Fu Q."/>
            <person name="Mei W.-Q."/>
            <person name="Song W.-Q."/>
            <person name="Ma L.-G."/>
            <person name="Luo J.-C."/>
            <person name="Deng X.-W."/>
            <person name="Zhu Y.-X."/>
        </authorList>
    </citation>
    <scope>NUCLEOTIDE SEQUENCE [MRNA]</scope>
</reference>
<reference key="2">
    <citation type="journal article" date="2000" name="Nature">
        <title>Sequence and analysis of chromosome 1 of the plant Arabidopsis thaliana.</title>
        <authorList>
            <person name="Theologis A."/>
            <person name="Ecker J.R."/>
            <person name="Palm C.J."/>
            <person name="Federspiel N.A."/>
            <person name="Kaul S."/>
            <person name="White O."/>
            <person name="Alonso J."/>
            <person name="Altafi H."/>
            <person name="Araujo R."/>
            <person name="Bowman C.L."/>
            <person name="Brooks S.Y."/>
            <person name="Buehler E."/>
            <person name="Chan A."/>
            <person name="Chao Q."/>
            <person name="Chen H."/>
            <person name="Cheuk R.F."/>
            <person name="Chin C.W."/>
            <person name="Chung M.K."/>
            <person name="Conn L."/>
            <person name="Conway A.B."/>
            <person name="Conway A.R."/>
            <person name="Creasy T.H."/>
            <person name="Dewar K."/>
            <person name="Dunn P."/>
            <person name="Etgu P."/>
            <person name="Feldblyum T.V."/>
            <person name="Feng J.-D."/>
            <person name="Fong B."/>
            <person name="Fujii C.Y."/>
            <person name="Gill J.E."/>
            <person name="Goldsmith A.D."/>
            <person name="Haas B."/>
            <person name="Hansen N.F."/>
            <person name="Hughes B."/>
            <person name="Huizar L."/>
            <person name="Hunter J.L."/>
            <person name="Jenkins J."/>
            <person name="Johnson-Hopson C."/>
            <person name="Khan S."/>
            <person name="Khaykin E."/>
            <person name="Kim C.J."/>
            <person name="Koo H.L."/>
            <person name="Kremenetskaia I."/>
            <person name="Kurtz D.B."/>
            <person name="Kwan A."/>
            <person name="Lam B."/>
            <person name="Langin-Hooper S."/>
            <person name="Lee A."/>
            <person name="Lee J.M."/>
            <person name="Lenz C.A."/>
            <person name="Li J.H."/>
            <person name="Li Y.-P."/>
            <person name="Lin X."/>
            <person name="Liu S.X."/>
            <person name="Liu Z.A."/>
            <person name="Luros J.S."/>
            <person name="Maiti R."/>
            <person name="Marziali A."/>
            <person name="Militscher J."/>
            <person name="Miranda M."/>
            <person name="Nguyen M."/>
            <person name="Nierman W.C."/>
            <person name="Osborne B.I."/>
            <person name="Pai G."/>
            <person name="Peterson J."/>
            <person name="Pham P.K."/>
            <person name="Rizzo M."/>
            <person name="Rooney T."/>
            <person name="Rowley D."/>
            <person name="Sakano H."/>
            <person name="Salzberg S.L."/>
            <person name="Schwartz J.R."/>
            <person name="Shinn P."/>
            <person name="Southwick A.M."/>
            <person name="Sun H."/>
            <person name="Tallon L.J."/>
            <person name="Tambunga G."/>
            <person name="Toriumi M.J."/>
            <person name="Town C.D."/>
            <person name="Utterback T."/>
            <person name="Van Aken S."/>
            <person name="Vaysberg M."/>
            <person name="Vysotskaia V.S."/>
            <person name="Walker M."/>
            <person name="Wu D."/>
            <person name="Yu G."/>
            <person name="Fraser C.M."/>
            <person name="Venter J.C."/>
            <person name="Davis R.W."/>
        </authorList>
    </citation>
    <scope>NUCLEOTIDE SEQUENCE [LARGE SCALE GENOMIC DNA]</scope>
    <source>
        <strain>cv. Columbia</strain>
    </source>
</reference>
<reference key="3">
    <citation type="journal article" date="2017" name="Plant J.">
        <title>Araport11: a complete reannotation of the Arabidopsis thaliana reference genome.</title>
        <authorList>
            <person name="Cheng C.Y."/>
            <person name="Krishnakumar V."/>
            <person name="Chan A.P."/>
            <person name="Thibaud-Nissen F."/>
            <person name="Schobel S."/>
            <person name="Town C.D."/>
        </authorList>
    </citation>
    <scope>GENOME REANNOTATION</scope>
    <source>
        <strain>cv. Columbia</strain>
    </source>
</reference>
<reference key="4">
    <citation type="journal article" date="2006" name="Plant Physiol.">
        <title>Genome-wide analysis of the ERF gene family in Arabidopsis and rice.</title>
        <authorList>
            <person name="Nakano T."/>
            <person name="Suzuki K."/>
            <person name="Fujimura T."/>
            <person name="Shinshi H."/>
        </authorList>
    </citation>
    <scope>GENE FAMILY</scope>
    <scope>NOMENCLATURE</scope>
</reference>
<proteinExistence type="evidence at transcript level"/>
<organism>
    <name type="scientific">Arabidopsis thaliana</name>
    <name type="common">Mouse-ear cress</name>
    <dbReference type="NCBI Taxonomy" id="3702"/>
    <lineage>
        <taxon>Eukaryota</taxon>
        <taxon>Viridiplantae</taxon>
        <taxon>Streptophyta</taxon>
        <taxon>Embryophyta</taxon>
        <taxon>Tracheophyta</taxon>
        <taxon>Spermatophyta</taxon>
        <taxon>Magnoliopsida</taxon>
        <taxon>eudicotyledons</taxon>
        <taxon>Gunneridae</taxon>
        <taxon>Pentapetalae</taxon>
        <taxon>rosids</taxon>
        <taxon>malvids</taxon>
        <taxon>Brassicales</taxon>
        <taxon>Brassicaceae</taxon>
        <taxon>Camelineae</taxon>
        <taxon>Arabidopsis</taxon>
    </lineage>
</organism>